<organism>
    <name type="scientific">Emericella nidulans (strain FGSC A4 / ATCC 38163 / CBS 112.46 / NRRL 194 / M139)</name>
    <name type="common">Aspergillus nidulans</name>
    <dbReference type="NCBI Taxonomy" id="227321"/>
    <lineage>
        <taxon>Eukaryota</taxon>
        <taxon>Fungi</taxon>
        <taxon>Dikarya</taxon>
        <taxon>Ascomycota</taxon>
        <taxon>Pezizomycotina</taxon>
        <taxon>Eurotiomycetes</taxon>
        <taxon>Eurotiomycetidae</taxon>
        <taxon>Eurotiales</taxon>
        <taxon>Aspergillaceae</taxon>
        <taxon>Aspergillus</taxon>
        <taxon>Aspergillus subgen. Nidulantes</taxon>
    </lineage>
</organism>
<name>SIDA_EMENI</name>
<gene>
    <name evidence="3" type="primary">sidA</name>
    <name type="ORF">AN5823</name>
</gene>
<reference key="1">
    <citation type="journal article" date="2003" name="Mol. Microbiol.">
        <title>The siderophore system is essential for viability of Aspergillus nidulans: functional analysis of two genes encoding l-ornithine N 5-monooxygenase (sidA) and a non-ribosomal peptide synthetase (sidC).</title>
        <authorList>
            <person name="Eisendle M."/>
            <person name="Oberegger H."/>
            <person name="Zadra I."/>
            <person name="Haas H."/>
        </authorList>
    </citation>
    <scope>NUCLEOTIDE SEQUENCE [GENOMIC DNA]</scope>
    <scope>FUNCTION</scope>
    <scope>PATHWAY</scope>
    <scope>DISRUPTION PHENOTYPE</scope>
    <source>
        <strain>WG355</strain>
    </source>
</reference>
<reference key="2">
    <citation type="journal article" date="2005" name="Nature">
        <title>Sequencing of Aspergillus nidulans and comparative analysis with A. fumigatus and A. oryzae.</title>
        <authorList>
            <person name="Galagan J.E."/>
            <person name="Calvo S.E."/>
            <person name="Cuomo C."/>
            <person name="Ma L.-J."/>
            <person name="Wortman J.R."/>
            <person name="Batzoglou S."/>
            <person name="Lee S.-I."/>
            <person name="Bastuerkmen M."/>
            <person name="Spevak C.C."/>
            <person name="Clutterbuck J."/>
            <person name="Kapitonov V."/>
            <person name="Jurka J."/>
            <person name="Scazzocchio C."/>
            <person name="Farman M.L."/>
            <person name="Butler J."/>
            <person name="Purcell S."/>
            <person name="Harris S."/>
            <person name="Braus G.H."/>
            <person name="Draht O."/>
            <person name="Busch S."/>
            <person name="D'Enfert C."/>
            <person name="Bouchier C."/>
            <person name="Goldman G.H."/>
            <person name="Bell-Pedersen D."/>
            <person name="Griffiths-Jones S."/>
            <person name="Doonan J.H."/>
            <person name="Yu J."/>
            <person name="Vienken K."/>
            <person name="Pain A."/>
            <person name="Freitag M."/>
            <person name="Selker E.U."/>
            <person name="Archer D.B."/>
            <person name="Penalva M.A."/>
            <person name="Oakley B.R."/>
            <person name="Momany M."/>
            <person name="Tanaka T."/>
            <person name="Kumagai T."/>
            <person name="Asai K."/>
            <person name="Machida M."/>
            <person name="Nierman W.C."/>
            <person name="Denning D.W."/>
            <person name="Caddick M.X."/>
            <person name="Hynes M."/>
            <person name="Paoletti M."/>
            <person name="Fischer R."/>
            <person name="Miller B.L."/>
            <person name="Dyer P.S."/>
            <person name="Sachs M.S."/>
            <person name="Osmani S.A."/>
            <person name="Birren B.W."/>
        </authorList>
    </citation>
    <scope>NUCLEOTIDE SEQUENCE [LARGE SCALE GENOMIC DNA]</scope>
    <source>
        <strain>FGSC A4 / ATCC 38163 / CBS 112.46 / NRRL 194 / M139</strain>
    </source>
</reference>
<reference key="3">
    <citation type="journal article" date="2009" name="Fungal Genet. Biol.">
        <title>The 2008 update of the Aspergillus nidulans genome annotation: a community effort.</title>
        <authorList>
            <person name="Wortman J.R."/>
            <person name="Gilsenan J.M."/>
            <person name="Joardar V."/>
            <person name="Deegan J."/>
            <person name="Clutterbuck J."/>
            <person name="Andersen M.R."/>
            <person name="Archer D."/>
            <person name="Bencina M."/>
            <person name="Braus G."/>
            <person name="Coutinho P."/>
            <person name="von Dohren H."/>
            <person name="Doonan J."/>
            <person name="Driessen A.J."/>
            <person name="Durek P."/>
            <person name="Espeso E."/>
            <person name="Fekete E."/>
            <person name="Flipphi M."/>
            <person name="Estrada C.G."/>
            <person name="Geysens S."/>
            <person name="Goldman G."/>
            <person name="de Groot P.W."/>
            <person name="Hansen K."/>
            <person name="Harris S.D."/>
            <person name="Heinekamp T."/>
            <person name="Helmstaedt K."/>
            <person name="Henrissat B."/>
            <person name="Hofmann G."/>
            <person name="Homan T."/>
            <person name="Horio T."/>
            <person name="Horiuchi H."/>
            <person name="James S."/>
            <person name="Jones M."/>
            <person name="Karaffa L."/>
            <person name="Karanyi Z."/>
            <person name="Kato M."/>
            <person name="Keller N."/>
            <person name="Kelly D.E."/>
            <person name="Kiel J.A."/>
            <person name="Kim J.M."/>
            <person name="van der Klei I.J."/>
            <person name="Klis F.M."/>
            <person name="Kovalchuk A."/>
            <person name="Krasevec N."/>
            <person name="Kubicek C.P."/>
            <person name="Liu B."/>
            <person name="Maccabe A."/>
            <person name="Meyer V."/>
            <person name="Mirabito P."/>
            <person name="Miskei M."/>
            <person name="Mos M."/>
            <person name="Mullins J."/>
            <person name="Nelson D.R."/>
            <person name="Nielsen J."/>
            <person name="Oakley B.R."/>
            <person name="Osmani S.A."/>
            <person name="Pakula T."/>
            <person name="Paszewski A."/>
            <person name="Paulsen I."/>
            <person name="Pilsyk S."/>
            <person name="Pocsi I."/>
            <person name="Punt P.J."/>
            <person name="Ram A.F."/>
            <person name="Ren Q."/>
            <person name="Robellet X."/>
            <person name="Robson G."/>
            <person name="Seiboth B."/>
            <person name="van Solingen P."/>
            <person name="Specht T."/>
            <person name="Sun J."/>
            <person name="Taheri-Talesh N."/>
            <person name="Takeshita N."/>
            <person name="Ussery D."/>
            <person name="vanKuyk P.A."/>
            <person name="Visser H."/>
            <person name="van de Vondervoort P.J."/>
            <person name="de Vries R.P."/>
            <person name="Walton J."/>
            <person name="Xiang X."/>
            <person name="Xiong Y."/>
            <person name="Zeng A.P."/>
            <person name="Brandt B.W."/>
            <person name="Cornell M.J."/>
            <person name="van den Hondel C.A."/>
            <person name="Visser J."/>
            <person name="Oliver S.G."/>
            <person name="Turner G."/>
        </authorList>
    </citation>
    <scope>GENOME REANNOTATION</scope>
    <source>
        <strain>FGSC A4 / ATCC 38163 / CBS 112.46 / NRRL 194 / M139</strain>
    </source>
</reference>
<comment type="function">
    <text evidence="2">Catalyzes the conversion of L-ornithine to N(5)-hydroxyornithine, the first step in the biosynthesis of all hydroxamate-containing siderophores, such as the secreted triacetylfusarinine C (TAFC) involved in iron uptake and the intracellular iron storage compound desferriferricrocin (DFFC).</text>
</comment>
<comment type="catalytic activity">
    <reaction evidence="1">
        <text>L-ornithine + NADPH + O2 = N(5)-hydroxy-L-ornithine + NADP(+) + H2O</text>
        <dbReference type="Rhea" id="RHEA:41508"/>
        <dbReference type="ChEBI" id="CHEBI:15377"/>
        <dbReference type="ChEBI" id="CHEBI:15379"/>
        <dbReference type="ChEBI" id="CHEBI:46911"/>
        <dbReference type="ChEBI" id="CHEBI:57783"/>
        <dbReference type="ChEBI" id="CHEBI:58349"/>
        <dbReference type="ChEBI" id="CHEBI:78275"/>
        <dbReference type="EC" id="1.14.13.196"/>
    </reaction>
</comment>
<comment type="catalytic activity">
    <reaction evidence="1">
        <text>L-ornithine + NADH + O2 = N(5)-hydroxy-L-ornithine + NAD(+) + H2O</text>
        <dbReference type="Rhea" id="RHEA:41512"/>
        <dbReference type="ChEBI" id="CHEBI:15377"/>
        <dbReference type="ChEBI" id="CHEBI:15379"/>
        <dbReference type="ChEBI" id="CHEBI:46911"/>
        <dbReference type="ChEBI" id="CHEBI:57540"/>
        <dbReference type="ChEBI" id="CHEBI:57945"/>
        <dbReference type="ChEBI" id="CHEBI:78275"/>
        <dbReference type="EC" id="1.14.13.196"/>
    </reaction>
</comment>
<comment type="cofactor">
    <cofactor evidence="1">
        <name>FAD</name>
        <dbReference type="ChEBI" id="CHEBI:57692"/>
    </cofactor>
    <text evidence="1">Binds 1 FAD per subunit.</text>
</comment>
<comment type="pathway">
    <text evidence="2">Siderophore biosynthesis.</text>
</comment>
<comment type="subunit">
    <text evidence="1">Homotetramer.</text>
</comment>
<comment type="disruption phenotype">
    <text evidence="2">Essential for viability. Grows only on siderophore-supplemented growth-medium, but shows decreased conidiation.</text>
</comment>
<comment type="similarity">
    <text evidence="4">Belongs to the lysine N(6)-hydroxylase/L-ornithine N(5)-oxygenase family.</text>
</comment>
<evidence type="ECO:0000250" key="1">
    <source>
        <dbReference type="UniProtKB" id="E9QYP0"/>
    </source>
</evidence>
<evidence type="ECO:0000269" key="2">
    <source>
    </source>
</evidence>
<evidence type="ECO:0000303" key="3">
    <source>
    </source>
</evidence>
<evidence type="ECO:0000305" key="4"/>
<protein>
    <recommendedName>
        <fullName evidence="3">L-ornithine N(5)-monooxygenase</fullName>
        <shortName evidence="3">OMO</shortName>
        <ecNumber evidence="1">1.14.13.196</ecNumber>
    </recommendedName>
    <alternativeName>
        <fullName evidence="1">L-ornithine N(5)-oxygenase</fullName>
    </alternativeName>
    <alternativeName>
        <fullName evidence="3">Siderophore biosynthesis protein A</fullName>
    </alternativeName>
</protein>
<accession>G5EB76</accession>
<accession>C8V080</accession>
<accession>Q5B0V7</accession>
<accession>Q7Z8P5</accession>
<feature type="chain" id="PRO_0000431072" description="L-ornithine N(5)-monooxygenase">
    <location>
        <begin position="1"/>
        <end position="498"/>
    </location>
</feature>
<feature type="binding site" evidence="1">
    <location>
        <begin position="80"/>
        <end position="88"/>
    </location>
    <ligand>
        <name>FAD</name>
        <dbReference type="ChEBI" id="CHEBI:57692"/>
    </ligand>
</feature>
<feature type="binding site" evidence="1">
    <location>
        <position position="99"/>
    </location>
    <ligand>
        <name>FAD</name>
        <dbReference type="ChEBI" id="CHEBI:57692"/>
    </ligand>
</feature>
<feature type="binding site" evidence="1">
    <location>
        <position position="104"/>
    </location>
    <ligand>
        <name>substrate</name>
    </ligand>
</feature>
<feature type="binding site" evidence="1">
    <location>
        <position position="165"/>
    </location>
    <ligand>
        <name>FAD</name>
        <dbReference type="ChEBI" id="CHEBI:57692"/>
    </ligand>
</feature>
<feature type="binding site" evidence="1">
    <location>
        <begin position="251"/>
        <end position="254"/>
    </location>
    <ligand>
        <name>NADP(+)</name>
        <dbReference type="ChEBI" id="CHEBI:58349"/>
    </ligand>
</feature>
<feature type="binding site" evidence="1">
    <location>
        <position position="276"/>
    </location>
    <ligand>
        <name>NADP(+)</name>
        <dbReference type="ChEBI" id="CHEBI:58349"/>
    </ligand>
</feature>
<feature type="binding site" evidence="1">
    <location>
        <begin position="290"/>
        <end position="293"/>
    </location>
    <ligand>
        <name>substrate</name>
    </ligand>
</feature>
<feature type="binding site" evidence="1">
    <location>
        <begin position="320"/>
        <end position="322"/>
    </location>
    <ligand>
        <name>NADP(+)</name>
        <dbReference type="ChEBI" id="CHEBI:58349"/>
    </ligand>
</feature>
<feature type="binding site" evidence="1">
    <location>
        <position position="320"/>
    </location>
    <ligand>
        <name>substrate</name>
    </ligand>
</feature>
<feature type="binding site" evidence="1">
    <location>
        <begin position="463"/>
        <end position="465"/>
    </location>
    <ligand>
        <name>FAD</name>
        <dbReference type="ChEBI" id="CHEBI:57692"/>
    </ligand>
</feature>
<feature type="binding site" evidence="1">
    <location>
        <position position="466"/>
    </location>
    <ligand>
        <name>substrate</name>
    </ligand>
</feature>
<keyword id="KW-0274">FAD</keyword>
<keyword id="KW-0285">Flavoprotein</keyword>
<keyword id="KW-0503">Monooxygenase</keyword>
<keyword id="KW-0521">NADP</keyword>
<keyword id="KW-0560">Oxidoreductase</keyword>
<keyword id="KW-1185">Reference proteome</keyword>
<dbReference type="EC" id="1.14.13.196" evidence="1"/>
<dbReference type="EMBL" id="AY223811">
    <property type="protein sequence ID" value="AAP56238.1"/>
    <property type="molecule type" value="Genomic_DNA"/>
</dbReference>
<dbReference type="EMBL" id="BN001301">
    <property type="protein sequence ID" value="CBF70776.1"/>
    <property type="molecule type" value="Genomic_DNA"/>
</dbReference>
<dbReference type="EMBL" id="AACD01000100">
    <property type="protein sequence ID" value="EAA58332.1"/>
    <property type="molecule type" value="Genomic_DNA"/>
</dbReference>
<dbReference type="RefSeq" id="XP_663427.1">
    <property type="nucleotide sequence ID" value="XM_658335.1"/>
</dbReference>
<dbReference type="SMR" id="G5EB76"/>
<dbReference type="STRING" id="227321.G5EB76"/>
<dbReference type="EnsemblFungi" id="CBF70776">
    <property type="protein sequence ID" value="CBF70776"/>
    <property type="gene ID" value="ANIA_05823"/>
</dbReference>
<dbReference type="KEGG" id="ani:ANIA_05823"/>
<dbReference type="VEuPathDB" id="FungiDB:AN5823"/>
<dbReference type="eggNOG" id="KOG1399">
    <property type="taxonomic scope" value="Eukaryota"/>
</dbReference>
<dbReference type="HOGENOM" id="CLU_020931_2_0_1"/>
<dbReference type="InParanoid" id="G5EB76"/>
<dbReference type="OMA" id="YHGNTNY"/>
<dbReference type="OrthoDB" id="3519933at2759"/>
<dbReference type="Proteomes" id="UP000000560">
    <property type="component" value="Chromosome I"/>
</dbReference>
<dbReference type="GO" id="GO:0031172">
    <property type="term" value="F:ornithine N5-monooxygenase activity"/>
    <property type="evidence" value="ECO:0007669"/>
    <property type="project" value="RHEA"/>
</dbReference>
<dbReference type="GO" id="GO:0010106">
    <property type="term" value="P:cellular response to iron ion starvation"/>
    <property type="evidence" value="ECO:0000270"/>
    <property type="project" value="AspGD"/>
</dbReference>
<dbReference type="GO" id="GO:0034599">
    <property type="term" value="P:cellular response to oxidative stress"/>
    <property type="evidence" value="ECO:0000315"/>
    <property type="project" value="AspGD"/>
</dbReference>
<dbReference type="GO" id="GO:0031169">
    <property type="term" value="P:ferrichrome biosynthetic process"/>
    <property type="evidence" value="ECO:0007669"/>
    <property type="project" value="EnsemblFungi"/>
</dbReference>
<dbReference type="GO" id="GO:0006879">
    <property type="term" value="P:intracellular iron ion homeostasis"/>
    <property type="evidence" value="ECO:0000315"/>
    <property type="project" value="AspGD"/>
</dbReference>
<dbReference type="GO" id="GO:0019290">
    <property type="term" value="P:siderophore biosynthetic process"/>
    <property type="evidence" value="ECO:0000315"/>
    <property type="project" value="AspGD"/>
</dbReference>
<dbReference type="FunFam" id="3.50.50.60:FF:000195">
    <property type="entry name" value="L-ornithine N(5)-monooxygenase"/>
    <property type="match status" value="1"/>
</dbReference>
<dbReference type="Gene3D" id="3.50.50.60">
    <property type="entry name" value="FAD/NAD(P)-binding domain"/>
    <property type="match status" value="1"/>
</dbReference>
<dbReference type="InterPro" id="IPR036188">
    <property type="entry name" value="FAD/NAD-bd_sf"/>
</dbReference>
<dbReference type="InterPro" id="IPR025700">
    <property type="entry name" value="Lys/Orn_oxygenase"/>
</dbReference>
<dbReference type="PANTHER" id="PTHR42802:SF1">
    <property type="entry name" value="L-ORNITHINE N(5)-MONOOXYGENASE"/>
    <property type="match status" value="1"/>
</dbReference>
<dbReference type="PANTHER" id="PTHR42802">
    <property type="entry name" value="MONOOXYGENASE"/>
    <property type="match status" value="1"/>
</dbReference>
<dbReference type="Pfam" id="PF13434">
    <property type="entry name" value="Lys_Orn_oxgnase"/>
    <property type="match status" value="1"/>
</dbReference>
<dbReference type="SUPFAM" id="SSF51905">
    <property type="entry name" value="FAD/NAD(P)-binding domain"/>
    <property type="match status" value="1"/>
</dbReference>
<sequence length="498" mass="56562">MEPLQRKSELDFQSYRKMPLAQQRTQRLKPTSPEELHDLICVGFGPASLAIAIALHDALDPCLNKCAPTSGWQPKVAFLERQKQFAWHSGMLVPGSRMQISFIKDLATLRDPRSSFTFLNYLHQKDRLIHFTNLSTFLPARMEFEDYMRWCANQFSDVVTYGEEVIEVLPGKSSPDSPVVDYFTVLSRNVETGEISSRSARKVVLALGGTAKLPAELPQDPRIMHSSKYCTALPNLLKDNNEPYNIAVLGSGQSAAEIFHDLQKRYPNSRTSLIMRDTAMRPSDDSPFVNEVFNPERTDKFYNLSAAERERSLKADKATNYSVVRLELIEEIYHDMYLQRVKNPDETQWQHRILPSRKITRVEHYGPNKRMRVHVRAVKDGKDSLIGDGKEVLEVDALMVATGYNRNAHEQLLSKVQYLRPATQDRWTPSRDYRVDLDRSKVSAGAGIWLQGSNEQTHGLSDSLLSVLATRGGEMVESIFGEQLESAAVPDTRFRAML</sequence>
<proteinExistence type="inferred from homology"/>